<sequence>MAAAALLAAVDRNQLRRVPILLLQPREWAWKLRTMKYGTTPGGSITKVLIANRGEIACRVIRTAKKMGVQSVAVYSEADRNSMHVDMADEAYSIGPAPSQQSYLAMEKIIQVAKSSAAQAIHPGYGFLSENMEFAELCKQEGIIFIGPPSSAIRDMGIKSTSKSIMAAAGVPVVEGYHGKDQSDQCLREHAGKIGYPVMIKAVRGGGGKGMRIVRSEREFQEQLESARREAKKSFNDDAMLIEKFVDTPRHVEVQVFGDHHGNAVYLFERDCSVQRRHQKIIEEAPAPGINPEVRRKLGEAAVRAAKAVKYVGAGTVEFIMDSRHNFYFMEMNTRLQVEHPVTEMITGTDLVEWQLRIAAGEKIPLSQEEIPLQGHAFEARIYAEDPDNNFMPGAGPLVHLSTPSADMSTRIETGVRQGDEVSVHYDPMIAKLVVWASDRQSALSKLRYCLHQYNIVGLRSNVDFLLRLSGHPEFEAGNVHTDFIPQHHKDLLPSHSTIAKESVCQAALGLILKEKEMTSAFKLHTQDQFSPFSFSSGRRLNISYTRNMTLRSGKSDIVIAVTYNRDGSYDMQIDNKSFRVLGDLSSEDGCTYLKSSINGVARKSKFILLDNTVHLFSMEGSIEVGIPVPKYLSPVSAEGAQGGTIAPMTGTIEKVFVKAGDRVKAGDSLMVMIAMKMEHTIKAPKDGRIKKVFFSEGAQANRHAPLVEFEEEESDK</sequence>
<accession>Q99MR8</accession>
<accession>Q3TGU0</accession>
<accession>Q9D8R2</accession>
<feature type="transit peptide" description="Mitochondrion" evidence="2">
    <location>
        <begin position="1"/>
        <end position="38"/>
    </location>
</feature>
<feature type="chain" id="PRO_0000002834" description="Methylcrotonoyl-CoA carboxylase subunit alpha, mitochondrial">
    <location>
        <begin position="39"/>
        <end position="717"/>
    </location>
</feature>
<feature type="domain" description="Biotin carboxylation">
    <location>
        <begin position="45"/>
        <end position="490"/>
    </location>
</feature>
<feature type="domain" description="ATP-grasp" evidence="3">
    <location>
        <begin position="163"/>
        <end position="360"/>
    </location>
</feature>
<feature type="domain" description="Biotinyl-binding" evidence="4">
    <location>
        <begin position="622"/>
        <end position="711"/>
    </location>
</feature>
<feature type="active site" evidence="1">
    <location>
        <position position="335"/>
    </location>
</feature>
<feature type="binding site" evidence="1">
    <location>
        <position position="159"/>
    </location>
    <ligand>
        <name>ATP</name>
        <dbReference type="ChEBI" id="CHEBI:30616"/>
    </ligand>
</feature>
<feature type="binding site" evidence="1">
    <location>
        <position position="201"/>
    </location>
    <ligand>
        <name>ATP</name>
        <dbReference type="ChEBI" id="CHEBI:30616"/>
    </ligand>
</feature>
<feature type="binding site" evidence="1">
    <location>
        <begin position="207"/>
        <end position="208"/>
    </location>
    <ligand>
        <name>ATP</name>
        <dbReference type="ChEBI" id="CHEBI:30616"/>
    </ligand>
</feature>
<feature type="binding site" evidence="1">
    <location>
        <position position="251"/>
    </location>
    <ligand>
        <name>ATP</name>
        <dbReference type="ChEBI" id="CHEBI:30616"/>
    </ligand>
</feature>
<feature type="binding site" evidence="1">
    <location>
        <position position="278"/>
    </location>
    <ligand>
        <name>ATP</name>
        <dbReference type="ChEBI" id="CHEBI:30616"/>
    </ligand>
</feature>
<feature type="binding site" evidence="1">
    <location>
        <position position="318"/>
    </location>
    <ligand>
        <name>ATP</name>
        <dbReference type="ChEBI" id="CHEBI:30616"/>
    </ligand>
</feature>
<feature type="modified residue" description="N6-acetyllysine" evidence="7">
    <location>
        <position position="180"/>
    </location>
</feature>
<feature type="modified residue" description="N6-acetyllysine" evidence="7">
    <location>
        <position position="193"/>
    </location>
</feature>
<feature type="modified residue" description="N6-acetyllysine" evidence="7">
    <location>
        <position position="233"/>
    </location>
</feature>
<feature type="modified residue" description="N6-acetyllysine" evidence="7">
    <location>
        <position position="490"/>
    </location>
</feature>
<feature type="modified residue" description="N6-acetyllysine; alternate" evidence="7">
    <location>
        <position position="577"/>
    </location>
</feature>
<feature type="modified residue" description="N6-succinyllysine; alternate" evidence="8">
    <location>
        <position position="577"/>
    </location>
</feature>
<feature type="modified residue" description="N6-biotinyllysine" evidence="4">
    <location>
        <position position="677"/>
    </location>
</feature>
<feature type="sequence conflict" description="In Ref. 3; AAH21382." evidence="6" ref="3">
    <original>R</original>
    <variation>K</variation>
    <location>
        <position position="324"/>
    </location>
</feature>
<feature type="sequence conflict" description="In Ref. 1; AAG50244." evidence="6" ref="1">
    <original>A</original>
    <variation>P</variation>
    <location>
        <position position="507"/>
    </location>
</feature>
<organism>
    <name type="scientific">Mus musculus</name>
    <name type="common">Mouse</name>
    <dbReference type="NCBI Taxonomy" id="10090"/>
    <lineage>
        <taxon>Eukaryota</taxon>
        <taxon>Metazoa</taxon>
        <taxon>Chordata</taxon>
        <taxon>Craniata</taxon>
        <taxon>Vertebrata</taxon>
        <taxon>Euteleostomi</taxon>
        <taxon>Mammalia</taxon>
        <taxon>Eutheria</taxon>
        <taxon>Euarchontoglires</taxon>
        <taxon>Glires</taxon>
        <taxon>Rodentia</taxon>
        <taxon>Myomorpha</taxon>
        <taxon>Muroidea</taxon>
        <taxon>Muridae</taxon>
        <taxon>Murinae</taxon>
        <taxon>Mus</taxon>
        <taxon>Mus</taxon>
    </lineage>
</organism>
<dbReference type="EC" id="6.4.1.4" evidence="2"/>
<dbReference type="EMBL" id="AF310338">
    <property type="protein sequence ID" value="AAG50244.1"/>
    <property type="molecule type" value="mRNA"/>
</dbReference>
<dbReference type="EMBL" id="AK007782">
    <property type="protein sequence ID" value="BAB25253.1"/>
    <property type="molecule type" value="mRNA"/>
</dbReference>
<dbReference type="EMBL" id="AK031072">
    <property type="protein sequence ID" value="BAC27239.1"/>
    <property type="molecule type" value="mRNA"/>
</dbReference>
<dbReference type="EMBL" id="AK168589">
    <property type="protein sequence ID" value="BAE40458.1"/>
    <property type="molecule type" value="mRNA"/>
</dbReference>
<dbReference type="EMBL" id="BC021382">
    <property type="protein sequence ID" value="AAH21382.1"/>
    <property type="molecule type" value="mRNA"/>
</dbReference>
<dbReference type="CCDS" id="CCDS17307.1"/>
<dbReference type="RefSeq" id="NP_076133.3">
    <property type="nucleotide sequence ID" value="NM_023644.4"/>
</dbReference>
<dbReference type="SMR" id="Q99MR8"/>
<dbReference type="BioGRID" id="215108">
    <property type="interactions" value="25"/>
</dbReference>
<dbReference type="FunCoup" id="Q99MR8">
    <property type="interactions" value="2255"/>
</dbReference>
<dbReference type="IntAct" id="Q99MR8">
    <property type="interactions" value="10"/>
</dbReference>
<dbReference type="MINT" id="Q99MR8"/>
<dbReference type="STRING" id="10090.ENSMUSP00000029259"/>
<dbReference type="GlyGen" id="Q99MR8">
    <property type="glycosylation" value="2 sites, 1 N-linked glycan (1 site), 1 O-linked glycan (1 site)"/>
</dbReference>
<dbReference type="iPTMnet" id="Q99MR8"/>
<dbReference type="PhosphoSitePlus" id="Q99MR8"/>
<dbReference type="SwissPalm" id="Q99MR8"/>
<dbReference type="jPOST" id="Q99MR8"/>
<dbReference type="PaxDb" id="10090-ENSMUSP00000029259"/>
<dbReference type="PeptideAtlas" id="Q99MR8"/>
<dbReference type="ProteomicsDB" id="287327"/>
<dbReference type="Pumba" id="Q99MR8"/>
<dbReference type="Antibodypedia" id="1557">
    <property type="antibodies" value="175 antibodies from 24 providers"/>
</dbReference>
<dbReference type="DNASU" id="72039"/>
<dbReference type="Ensembl" id="ENSMUST00000029259.10">
    <property type="protein sequence ID" value="ENSMUSP00000029259.4"/>
    <property type="gene ID" value="ENSMUSG00000027709.10"/>
</dbReference>
<dbReference type="GeneID" id="72039"/>
<dbReference type="KEGG" id="mmu:72039"/>
<dbReference type="UCSC" id="uc008oyy.3">
    <property type="organism name" value="mouse"/>
</dbReference>
<dbReference type="AGR" id="MGI:1919289"/>
<dbReference type="CTD" id="56922"/>
<dbReference type="MGI" id="MGI:1919289">
    <property type="gene designation" value="Mccc1"/>
</dbReference>
<dbReference type="VEuPathDB" id="HostDB:ENSMUSG00000027709"/>
<dbReference type="eggNOG" id="KOG0238">
    <property type="taxonomic scope" value="Eukaryota"/>
</dbReference>
<dbReference type="GeneTree" id="ENSGT00940000156941"/>
<dbReference type="HOGENOM" id="CLU_000395_3_1_1"/>
<dbReference type="InParanoid" id="Q99MR8"/>
<dbReference type="OMA" id="FINKPKH"/>
<dbReference type="OrthoDB" id="196847at2759"/>
<dbReference type="PhylomeDB" id="Q99MR8"/>
<dbReference type="TreeFam" id="TF105650"/>
<dbReference type="Reactome" id="R-MMU-196780">
    <property type="pathway name" value="Biotin transport and metabolism"/>
</dbReference>
<dbReference type="Reactome" id="R-MMU-70895">
    <property type="pathway name" value="Branched-chain amino acid catabolism"/>
</dbReference>
<dbReference type="UniPathway" id="UPA00363">
    <property type="reaction ID" value="UER00861"/>
</dbReference>
<dbReference type="BioGRID-ORCS" id="72039">
    <property type="hits" value="4 hits in 79 CRISPR screens"/>
</dbReference>
<dbReference type="CD-CODE" id="CE726F99">
    <property type="entry name" value="Postsynaptic density"/>
</dbReference>
<dbReference type="ChiTaRS" id="Mccc1">
    <property type="organism name" value="mouse"/>
</dbReference>
<dbReference type="PRO" id="PR:Q99MR8"/>
<dbReference type="Proteomes" id="UP000000589">
    <property type="component" value="Chromosome 3"/>
</dbReference>
<dbReference type="RNAct" id="Q99MR8">
    <property type="molecule type" value="protein"/>
</dbReference>
<dbReference type="Bgee" id="ENSMUSG00000027709">
    <property type="expression patterns" value="Expressed in brown adipose tissue and 280 other cell types or tissues"/>
</dbReference>
<dbReference type="ExpressionAtlas" id="Q99MR8">
    <property type="expression patterns" value="baseline and differential"/>
</dbReference>
<dbReference type="GO" id="GO:1905202">
    <property type="term" value="C:methylcrotonoyl-CoA carboxylase complex"/>
    <property type="evidence" value="ECO:0000250"/>
    <property type="project" value="UniProtKB"/>
</dbReference>
<dbReference type="GO" id="GO:0005743">
    <property type="term" value="C:mitochondrial inner membrane"/>
    <property type="evidence" value="ECO:0007005"/>
    <property type="project" value="MGI"/>
</dbReference>
<dbReference type="GO" id="GO:0005759">
    <property type="term" value="C:mitochondrial matrix"/>
    <property type="evidence" value="ECO:0007669"/>
    <property type="project" value="UniProtKB-SubCell"/>
</dbReference>
<dbReference type="GO" id="GO:0005739">
    <property type="term" value="C:mitochondrion"/>
    <property type="evidence" value="ECO:0007005"/>
    <property type="project" value="MGI"/>
</dbReference>
<dbReference type="GO" id="GO:0005524">
    <property type="term" value="F:ATP binding"/>
    <property type="evidence" value="ECO:0007669"/>
    <property type="project" value="UniProtKB-KW"/>
</dbReference>
<dbReference type="GO" id="GO:0046872">
    <property type="term" value="F:metal ion binding"/>
    <property type="evidence" value="ECO:0007669"/>
    <property type="project" value="InterPro"/>
</dbReference>
<dbReference type="GO" id="GO:0004485">
    <property type="term" value="F:methylcrotonoyl-CoA carboxylase activity"/>
    <property type="evidence" value="ECO:0007669"/>
    <property type="project" value="UniProtKB-EC"/>
</dbReference>
<dbReference type="GO" id="GO:0006552">
    <property type="term" value="P:L-leucine catabolic process"/>
    <property type="evidence" value="ECO:0007669"/>
    <property type="project" value="UniProtKB-UniPathway"/>
</dbReference>
<dbReference type="CDD" id="cd06850">
    <property type="entry name" value="biotinyl_domain"/>
    <property type="match status" value="1"/>
</dbReference>
<dbReference type="FunFam" id="2.40.50.100:FF:000003">
    <property type="entry name" value="Acetyl-CoA carboxylase biotin carboxyl carrier protein"/>
    <property type="match status" value="1"/>
</dbReference>
<dbReference type="FunFam" id="3.30.1490.20:FF:000003">
    <property type="entry name" value="acetyl-CoA carboxylase isoform X1"/>
    <property type="match status" value="1"/>
</dbReference>
<dbReference type="FunFam" id="3.30.470.20:FF:000028">
    <property type="entry name" value="Methylcrotonoyl-CoA carboxylase subunit alpha, mitochondrial"/>
    <property type="match status" value="1"/>
</dbReference>
<dbReference type="FunFam" id="3.40.50.20:FF:000010">
    <property type="entry name" value="Propionyl-CoA carboxylase subunit alpha"/>
    <property type="match status" value="1"/>
</dbReference>
<dbReference type="Gene3D" id="2.40.50.100">
    <property type="match status" value="1"/>
</dbReference>
<dbReference type="Gene3D" id="3.30.700.40">
    <property type="match status" value="1"/>
</dbReference>
<dbReference type="Gene3D" id="3.30.470.20">
    <property type="entry name" value="ATP-grasp fold, B domain"/>
    <property type="match status" value="1"/>
</dbReference>
<dbReference type="InterPro" id="IPR011761">
    <property type="entry name" value="ATP-grasp"/>
</dbReference>
<dbReference type="InterPro" id="IPR005481">
    <property type="entry name" value="BC-like_N"/>
</dbReference>
<dbReference type="InterPro" id="IPR001882">
    <property type="entry name" value="Biotin_BS"/>
</dbReference>
<dbReference type="InterPro" id="IPR050856">
    <property type="entry name" value="Biotin_carboxylase_complex"/>
</dbReference>
<dbReference type="InterPro" id="IPR011764">
    <property type="entry name" value="Biotin_carboxylation_dom"/>
</dbReference>
<dbReference type="InterPro" id="IPR005482">
    <property type="entry name" value="Biotin_COase_C"/>
</dbReference>
<dbReference type="InterPro" id="IPR000089">
    <property type="entry name" value="Biotin_lipoyl"/>
</dbReference>
<dbReference type="InterPro" id="IPR005479">
    <property type="entry name" value="CbamoylP_synth_lsu-like_ATP-bd"/>
</dbReference>
<dbReference type="InterPro" id="IPR016185">
    <property type="entry name" value="PreATP-grasp_dom_sf"/>
</dbReference>
<dbReference type="InterPro" id="IPR011054">
    <property type="entry name" value="Rudment_hybrid_motif"/>
</dbReference>
<dbReference type="InterPro" id="IPR011053">
    <property type="entry name" value="Single_hybrid_motif"/>
</dbReference>
<dbReference type="NCBIfam" id="NF006367">
    <property type="entry name" value="PRK08591.1"/>
    <property type="match status" value="1"/>
</dbReference>
<dbReference type="PANTHER" id="PTHR18866">
    <property type="entry name" value="CARBOXYLASE:PYRUVATE/ACETYL-COA/PROPIONYL-COA CARBOXYLASE"/>
    <property type="match status" value="1"/>
</dbReference>
<dbReference type="PANTHER" id="PTHR18866:SF33">
    <property type="entry name" value="METHYLCROTONOYL-COA CARBOXYLASE SUBUNIT ALPHA, MITOCHONDRIAL-RELATED"/>
    <property type="match status" value="1"/>
</dbReference>
<dbReference type="Pfam" id="PF02785">
    <property type="entry name" value="Biotin_carb_C"/>
    <property type="match status" value="1"/>
</dbReference>
<dbReference type="Pfam" id="PF00289">
    <property type="entry name" value="Biotin_carb_N"/>
    <property type="match status" value="1"/>
</dbReference>
<dbReference type="Pfam" id="PF00364">
    <property type="entry name" value="Biotin_lipoyl"/>
    <property type="match status" value="1"/>
</dbReference>
<dbReference type="Pfam" id="PF02786">
    <property type="entry name" value="CPSase_L_D2"/>
    <property type="match status" value="1"/>
</dbReference>
<dbReference type="SMART" id="SM00878">
    <property type="entry name" value="Biotin_carb_C"/>
    <property type="match status" value="1"/>
</dbReference>
<dbReference type="SUPFAM" id="SSF56059">
    <property type="entry name" value="Glutathione synthetase ATP-binding domain-like"/>
    <property type="match status" value="1"/>
</dbReference>
<dbReference type="SUPFAM" id="SSF52440">
    <property type="entry name" value="PreATP-grasp domain"/>
    <property type="match status" value="1"/>
</dbReference>
<dbReference type="SUPFAM" id="SSF51246">
    <property type="entry name" value="Rudiment single hybrid motif"/>
    <property type="match status" value="1"/>
</dbReference>
<dbReference type="SUPFAM" id="SSF51230">
    <property type="entry name" value="Single hybrid motif"/>
    <property type="match status" value="1"/>
</dbReference>
<dbReference type="PROSITE" id="PS50975">
    <property type="entry name" value="ATP_GRASP"/>
    <property type="match status" value="1"/>
</dbReference>
<dbReference type="PROSITE" id="PS50979">
    <property type="entry name" value="BC"/>
    <property type="match status" value="1"/>
</dbReference>
<dbReference type="PROSITE" id="PS00188">
    <property type="entry name" value="BIOTIN"/>
    <property type="match status" value="1"/>
</dbReference>
<dbReference type="PROSITE" id="PS50968">
    <property type="entry name" value="BIOTINYL_LIPOYL"/>
    <property type="match status" value="1"/>
</dbReference>
<dbReference type="PROSITE" id="PS00867">
    <property type="entry name" value="CPSASE_2"/>
    <property type="match status" value="1"/>
</dbReference>
<reference key="1">
    <citation type="journal article" date="2001" name="J. Clin. Invest.">
        <title>The molecular basis of human 3-methylcrotonyl-CoA carboxylase deficiency.</title>
        <authorList>
            <person name="Baumgartner M.R."/>
            <person name="Almashanu S."/>
            <person name="Suormala T."/>
            <person name="Obie C."/>
            <person name="Cole R.N."/>
            <person name="Packman S."/>
            <person name="Baumgartner E.R."/>
            <person name="Valle D."/>
        </authorList>
    </citation>
    <scope>NUCLEOTIDE SEQUENCE [MRNA]</scope>
    <source>
        <strain>C57BL/6J</strain>
    </source>
</reference>
<reference key="2">
    <citation type="journal article" date="2005" name="Science">
        <title>The transcriptional landscape of the mammalian genome.</title>
        <authorList>
            <person name="Carninci P."/>
            <person name="Kasukawa T."/>
            <person name="Katayama S."/>
            <person name="Gough J."/>
            <person name="Frith M.C."/>
            <person name="Maeda N."/>
            <person name="Oyama R."/>
            <person name="Ravasi T."/>
            <person name="Lenhard B."/>
            <person name="Wells C."/>
            <person name="Kodzius R."/>
            <person name="Shimokawa K."/>
            <person name="Bajic V.B."/>
            <person name="Brenner S.E."/>
            <person name="Batalov S."/>
            <person name="Forrest A.R."/>
            <person name="Zavolan M."/>
            <person name="Davis M.J."/>
            <person name="Wilming L.G."/>
            <person name="Aidinis V."/>
            <person name="Allen J.E."/>
            <person name="Ambesi-Impiombato A."/>
            <person name="Apweiler R."/>
            <person name="Aturaliya R.N."/>
            <person name="Bailey T.L."/>
            <person name="Bansal M."/>
            <person name="Baxter L."/>
            <person name="Beisel K.W."/>
            <person name="Bersano T."/>
            <person name="Bono H."/>
            <person name="Chalk A.M."/>
            <person name="Chiu K.P."/>
            <person name="Choudhary V."/>
            <person name="Christoffels A."/>
            <person name="Clutterbuck D.R."/>
            <person name="Crowe M.L."/>
            <person name="Dalla E."/>
            <person name="Dalrymple B.P."/>
            <person name="de Bono B."/>
            <person name="Della Gatta G."/>
            <person name="di Bernardo D."/>
            <person name="Down T."/>
            <person name="Engstrom P."/>
            <person name="Fagiolini M."/>
            <person name="Faulkner G."/>
            <person name="Fletcher C.F."/>
            <person name="Fukushima T."/>
            <person name="Furuno M."/>
            <person name="Futaki S."/>
            <person name="Gariboldi M."/>
            <person name="Georgii-Hemming P."/>
            <person name="Gingeras T.R."/>
            <person name="Gojobori T."/>
            <person name="Green R.E."/>
            <person name="Gustincich S."/>
            <person name="Harbers M."/>
            <person name="Hayashi Y."/>
            <person name="Hensch T.K."/>
            <person name="Hirokawa N."/>
            <person name="Hill D."/>
            <person name="Huminiecki L."/>
            <person name="Iacono M."/>
            <person name="Ikeo K."/>
            <person name="Iwama A."/>
            <person name="Ishikawa T."/>
            <person name="Jakt M."/>
            <person name="Kanapin A."/>
            <person name="Katoh M."/>
            <person name="Kawasawa Y."/>
            <person name="Kelso J."/>
            <person name="Kitamura H."/>
            <person name="Kitano H."/>
            <person name="Kollias G."/>
            <person name="Krishnan S.P."/>
            <person name="Kruger A."/>
            <person name="Kummerfeld S.K."/>
            <person name="Kurochkin I.V."/>
            <person name="Lareau L.F."/>
            <person name="Lazarevic D."/>
            <person name="Lipovich L."/>
            <person name="Liu J."/>
            <person name="Liuni S."/>
            <person name="McWilliam S."/>
            <person name="Madan Babu M."/>
            <person name="Madera M."/>
            <person name="Marchionni L."/>
            <person name="Matsuda H."/>
            <person name="Matsuzawa S."/>
            <person name="Miki H."/>
            <person name="Mignone F."/>
            <person name="Miyake S."/>
            <person name="Morris K."/>
            <person name="Mottagui-Tabar S."/>
            <person name="Mulder N."/>
            <person name="Nakano N."/>
            <person name="Nakauchi H."/>
            <person name="Ng P."/>
            <person name="Nilsson R."/>
            <person name="Nishiguchi S."/>
            <person name="Nishikawa S."/>
            <person name="Nori F."/>
            <person name="Ohara O."/>
            <person name="Okazaki Y."/>
            <person name="Orlando V."/>
            <person name="Pang K.C."/>
            <person name="Pavan W.J."/>
            <person name="Pavesi G."/>
            <person name="Pesole G."/>
            <person name="Petrovsky N."/>
            <person name="Piazza S."/>
            <person name="Reed J."/>
            <person name="Reid J.F."/>
            <person name="Ring B.Z."/>
            <person name="Ringwald M."/>
            <person name="Rost B."/>
            <person name="Ruan Y."/>
            <person name="Salzberg S.L."/>
            <person name="Sandelin A."/>
            <person name="Schneider C."/>
            <person name="Schoenbach C."/>
            <person name="Sekiguchi K."/>
            <person name="Semple C.A."/>
            <person name="Seno S."/>
            <person name="Sessa L."/>
            <person name="Sheng Y."/>
            <person name="Shibata Y."/>
            <person name="Shimada H."/>
            <person name="Shimada K."/>
            <person name="Silva D."/>
            <person name="Sinclair B."/>
            <person name="Sperling S."/>
            <person name="Stupka E."/>
            <person name="Sugiura K."/>
            <person name="Sultana R."/>
            <person name="Takenaka Y."/>
            <person name="Taki K."/>
            <person name="Tammoja K."/>
            <person name="Tan S.L."/>
            <person name="Tang S."/>
            <person name="Taylor M.S."/>
            <person name="Tegner J."/>
            <person name="Teichmann S.A."/>
            <person name="Ueda H.R."/>
            <person name="van Nimwegen E."/>
            <person name="Verardo R."/>
            <person name="Wei C.L."/>
            <person name="Yagi K."/>
            <person name="Yamanishi H."/>
            <person name="Zabarovsky E."/>
            <person name="Zhu S."/>
            <person name="Zimmer A."/>
            <person name="Hide W."/>
            <person name="Bult C."/>
            <person name="Grimmond S.M."/>
            <person name="Teasdale R.D."/>
            <person name="Liu E.T."/>
            <person name="Brusic V."/>
            <person name="Quackenbush J."/>
            <person name="Wahlestedt C."/>
            <person name="Mattick J.S."/>
            <person name="Hume D.A."/>
            <person name="Kai C."/>
            <person name="Sasaki D."/>
            <person name="Tomaru Y."/>
            <person name="Fukuda S."/>
            <person name="Kanamori-Katayama M."/>
            <person name="Suzuki M."/>
            <person name="Aoki J."/>
            <person name="Arakawa T."/>
            <person name="Iida J."/>
            <person name="Imamura K."/>
            <person name="Itoh M."/>
            <person name="Kato T."/>
            <person name="Kawaji H."/>
            <person name="Kawagashira N."/>
            <person name="Kawashima T."/>
            <person name="Kojima M."/>
            <person name="Kondo S."/>
            <person name="Konno H."/>
            <person name="Nakano K."/>
            <person name="Ninomiya N."/>
            <person name="Nishio T."/>
            <person name="Okada M."/>
            <person name="Plessy C."/>
            <person name="Shibata K."/>
            <person name="Shiraki T."/>
            <person name="Suzuki S."/>
            <person name="Tagami M."/>
            <person name="Waki K."/>
            <person name="Watahiki A."/>
            <person name="Okamura-Oho Y."/>
            <person name="Suzuki H."/>
            <person name="Kawai J."/>
            <person name="Hayashizaki Y."/>
        </authorList>
    </citation>
    <scope>NUCLEOTIDE SEQUENCE [LARGE SCALE MRNA]</scope>
    <source>
        <strain>C57BL/6J</strain>
        <tissue>Embryonic limb</tissue>
        <tissue>Heart</tissue>
        <tissue>Pancreas</tissue>
    </source>
</reference>
<reference key="3">
    <citation type="journal article" date="2004" name="Genome Res.">
        <title>The status, quality, and expansion of the NIH full-length cDNA project: the Mammalian Gene Collection (MGC).</title>
        <authorList>
            <consortium name="The MGC Project Team"/>
        </authorList>
    </citation>
    <scope>NUCLEOTIDE SEQUENCE [LARGE SCALE MRNA]</scope>
    <source>
        <tissue>Kidney</tissue>
    </source>
</reference>
<reference key="4">
    <citation type="journal article" date="2010" name="Cell">
        <title>A tissue-specific atlas of mouse protein phosphorylation and expression.</title>
        <authorList>
            <person name="Huttlin E.L."/>
            <person name="Jedrychowski M.P."/>
            <person name="Elias J.E."/>
            <person name="Goswami T."/>
            <person name="Rad R."/>
            <person name="Beausoleil S.A."/>
            <person name="Villen J."/>
            <person name="Haas W."/>
            <person name="Sowa M.E."/>
            <person name="Gygi S.P."/>
        </authorList>
    </citation>
    <scope>IDENTIFICATION BY MASS SPECTROMETRY [LARGE SCALE ANALYSIS]</scope>
    <source>
        <tissue>Brain</tissue>
        <tissue>Brown adipose tissue</tissue>
        <tissue>Heart</tissue>
        <tissue>Kidney</tissue>
        <tissue>Liver</tissue>
        <tissue>Lung</tissue>
        <tissue>Pancreas</tissue>
        <tissue>Spleen</tissue>
        <tissue>Testis</tissue>
    </source>
</reference>
<reference key="5">
    <citation type="journal article" date="2013" name="Mitochondrion">
        <title>Mitochondrial SIRT4-type proteins in Caenorhabditis elegans and mammals interact with pyruvate carboxylase and other acetylated biotin-dependent carboxylases.</title>
        <authorList>
            <person name="Wirth M."/>
            <person name="Karaca S."/>
            <person name="Wenzel D."/>
            <person name="Ho L."/>
            <person name="Tishkoff D."/>
            <person name="Lombard D.B."/>
            <person name="Verdin E."/>
            <person name="Urlaub H."/>
            <person name="Jedrusik-Bode M."/>
            <person name="Fischle W."/>
        </authorList>
    </citation>
    <scope>INTERACTION WITH SIRT4</scope>
    <scope>ACETYLATION</scope>
</reference>
<reference key="6">
    <citation type="journal article" date="2013" name="Mol. Cell">
        <title>SIRT5-mediated lysine desuccinylation impacts diverse metabolic pathways.</title>
        <authorList>
            <person name="Park J."/>
            <person name="Chen Y."/>
            <person name="Tishkoff D.X."/>
            <person name="Peng C."/>
            <person name="Tan M."/>
            <person name="Dai L."/>
            <person name="Xie Z."/>
            <person name="Zhang Y."/>
            <person name="Zwaans B.M."/>
            <person name="Skinner M.E."/>
            <person name="Lombard D.B."/>
            <person name="Zhao Y."/>
        </authorList>
    </citation>
    <scope>SUCCINYLATION [LARGE SCALE ANALYSIS] AT LYS-577</scope>
    <scope>IDENTIFICATION BY MASS SPECTROMETRY [LARGE SCALE ANALYSIS]</scope>
    <source>
        <tissue>Liver</tissue>
    </source>
</reference>
<reference key="7">
    <citation type="journal article" date="2013" name="Proc. Natl. Acad. Sci. U.S.A.">
        <title>Label-free quantitative proteomics of the lysine acetylome in mitochondria identifies substrates of SIRT3 in metabolic pathways.</title>
        <authorList>
            <person name="Rardin M.J."/>
            <person name="Newman J.C."/>
            <person name="Held J.M."/>
            <person name="Cusack M.P."/>
            <person name="Sorensen D.J."/>
            <person name="Li B."/>
            <person name="Schilling B."/>
            <person name="Mooney S.D."/>
            <person name="Kahn C.R."/>
            <person name="Verdin E."/>
            <person name="Gibson B.W."/>
        </authorList>
    </citation>
    <scope>ACETYLATION [LARGE SCALE ANALYSIS] AT LYS-180; LYS-193; LYS-233; LYS-490 AND LYS-577</scope>
    <scope>IDENTIFICATION BY MASS SPECTROMETRY [LARGE SCALE ANALYSIS]</scope>
    <source>
        <tissue>Liver</tissue>
    </source>
</reference>
<keyword id="KW-0007">Acetylation</keyword>
<keyword id="KW-0067">ATP-binding</keyword>
<keyword id="KW-0092">Biotin</keyword>
<keyword id="KW-0436">Ligase</keyword>
<keyword id="KW-0496">Mitochondrion</keyword>
<keyword id="KW-0547">Nucleotide-binding</keyword>
<keyword id="KW-1185">Reference proteome</keyword>
<keyword id="KW-0809">Transit peptide</keyword>
<comment type="function">
    <text evidence="2">Biotin-attachment subunit of the 3-methylcrotonyl-CoA carboxylase, an enzyme that catalyzes the conversion of 3-methylcrotonyl-CoA to 3-methylglutaconyl-CoA, a critical step for leucine and isovaleric acid catabolism.</text>
</comment>
<comment type="catalytic activity">
    <reaction evidence="2">
        <text>3-methylbut-2-enoyl-CoA + hydrogencarbonate + ATP = 3-methyl-(2E)-glutaconyl-CoA + ADP + phosphate + H(+)</text>
        <dbReference type="Rhea" id="RHEA:13589"/>
        <dbReference type="ChEBI" id="CHEBI:15378"/>
        <dbReference type="ChEBI" id="CHEBI:17544"/>
        <dbReference type="ChEBI" id="CHEBI:30616"/>
        <dbReference type="ChEBI" id="CHEBI:43474"/>
        <dbReference type="ChEBI" id="CHEBI:57344"/>
        <dbReference type="ChEBI" id="CHEBI:57346"/>
        <dbReference type="ChEBI" id="CHEBI:456216"/>
        <dbReference type="EC" id="6.4.1.4"/>
    </reaction>
</comment>
<comment type="cofactor">
    <cofactor evidence="4">
        <name>biotin</name>
        <dbReference type="ChEBI" id="CHEBI:57586"/>
    </cofactor>
</comment>
<comment type="pathway">
    <text>Amino-acid degradation; L-leucine degradation; (S)-3-hydroxy-3-methylglutaryl-CoA from 3-isovaleryl-CoA: step 2/3.</text>
</comment>
<comment type="subunit">
    <text evidence="2 5">Probably a dodecamer composed of six biotin-containing alpha subunits (MCCC1) and six beta (MCCC2) subunits (By similarity). Interacts (via the biotin carboxylation domain) with SIRT4 (PubMed:23438705).</text>
</comment>
<comment type="subcellular location">
    <subcellularLocation>
        <location evidence="2">Mitochondrion matrix</location>
    </subcellularLocation>
</comment>
<comment type="PTM">
    <text evidence="5">Acetylated.</text>
</comment>
<evidence type="ECO:0000250" key="1">
    <source>
        <dbReference type="UniProtKB" id="P24182"/>
    </source>
</evidence>
<evidence type="ECO:0000250" key="2">
    <source>
        <dbReference type="UniProtKB" id="Q96RQ3"/>
    </source>
</evidence>
<evidence type="ECO:0000255" key="3">
    <source>
        <dbReference type="PROSITE-ProRule" id="PRU00409"/>
    </source>
</evidence>
<evidence type="ECO:0000255" key="4">
    <source>
        <dbReference type="PROSITE-ProRule" id="PRU01066"/>
    </source>
</evidence>
<evidence type="ECO:0000269" key="5">
    <source>
    </source>
</evidence>
<evidence type="ECO:0000305" key="6"/>
<evidence type="ECO:0007744" key="7">
    <source>
    </source>
</evidence>
<evidence type="ECO:0007744" key="8">
    <source>
    </source>
</evidence>
<proteinExistence type="evidence at protein level"/>
<name>MCCA_MOUSE</name>
<protein>
    <recommendedName>
        <fullName>Methylcrotonoyl-CoA carboxylase subunit alpha, mitochondrial</fullName>
        <shortName>MCCase subunit alpha</shortName>
        <ecNumber evidence="2">6.4.1.4</ecNumber>
    </recommendedName>
    <alternativeName>
        <fullName>3-methylcrotonyl-CoA carboxylase 1</fullName>
    </alternativeName>
    <alternativeName>
        <fullName>3-methylcrotonyl-CoA carboxylase biotin-containing subunit</fullName>
    </alternativeName>
    <alternativeName>
        <fullName>3-methylcrotonyl-CoA:carbon dioxide ligase subunit alpha</fullName>
    </alternativeName>
</protein>
<gene>
    <name type="primary">Mccc1</name>
    <name type="synonym">Mcca</name>
</gene>